<organism>
    <name type="scientific">Margaritifera margaritifera</name>
    <name type="common">Freshwater pearl mussel</name>
    <dbReference type="NCBI Taxonomy" id="102329"/>
    <lineage>
        <taxon>Eukaryota</taxon>
        <taxon>Metazoa</taxon>
        <taxon>Spiralia</taxon>
        <taxon>Lophotrochozoa</taxon>
        <taxon>Mollusca</taxon>
        <taxon>Bivalvia</taxon>
        <taxon>Autobranchia</taxon>
        <taxon>Pteriomorphia</taxon>
        <taxon>Pterioida</taxon>
        <taxon>Pterioidea</taxon>
        <taxon>Pteriidae</taxon>
        <taxon>Pinctada</taxon>
    </lineage>
</organism>
<feature type="signal peptide" evidence="1">
    <location>
        <begin position="1"/>
        <end position="19"/>
    </location>
</feature>
<feature type="chain" id="PRO_0000417932" description="Uncharacterized shell protein 12" evidence="1">
    <location>
        <begin position="20"/>
        <end position="75"/>
    </location>
</feature>
<dbReference type="EMBL" id="HE610410">
    <property type="protein sequence ID" value="CCE46184.1"/>
    <property type="molecule type" value="mRNA"/>
</dbReference>
<dbReference type="GO" id="GO:0005576">
    <property type="term" value="C:extracellular region"/>
    <property type="evidence" value="ECO:0007669"/>
    <property type="project" value="UniProtKB-SubCell"/>
</dbReference>
<comment type="subcellular location">
    <subcellularLocation>
        <location evidence="2">Secreted</location>
    </subcellularLocation>
</comment>
<comment type="tissue specificity">
    <text evidence="2">Nacreous layer of shell (at protein level).</text>
</comment>
<accession>H2A0P3</accession>
<keyword id="KW-0903">Direct protein sequencing</keyword>
<keyword id="KW-0964">Secreted</keyword>
<keyword id="KW-0732">Signal</keyword>
<protein>
    <recommendedName>
        <fullName>Uncharacterized shell protein 12</fullName>
    </recommendedName>
    <alternativeName>
        <fullName>Nacre uncharacterized shell protein 20</fullName>
    </alternativeName>
</protein>
<name>USP12_PINMG</name>
<proteinExistence type="evidence at protein level"/>
<reference evidence="3" key="1">
    <citation type="journal article" date="2010" name="BMC Genomics">
        <title>Transcriptome and proteome analysis of Pinctada margaritifera calcifying mantle and shell: focus on biomineralization.</title>
        <authorList>
            <person name="Joubert C."/>
            <person name="Piquemal D."/>
            <person name="Marie B."/>
            <person name="Manchon L."/>
            <person name="Pierrat F."/>
            <person name="Zanella-Cleon I."/>
            <person name="Cochennec-Laureau N."/>
            <person name="Gueguen Y."/>
            <person name="Montagnani C."/>
        </authorList>
    </citation>
    <scope>NUCLEOTIDE SEQUENCE [MRNA]</scope>
    <scope>IDENTIFICATION</scope>
    <source>
        <tissue>Mantle</tissue>
    </source>
</reference>
<reference key="2">
    <citation type="journal article" date="2012" name="Proc. Natl. Acad. Sci. U.S.A.">
        <title>Different secretory repertoires control the biomineralization processes of prism and nacre deposition of the pearl oyster shell.</title>
        <authorList>
            <person name="Marie B."/>
            <person name="Joubert C."/>
            <person name="Tayale A."/>
            <person name="Zanella-Cleon I."/>
            <person name="Belliard C."/>
            <person name="Piquemal D."/>
            <person name="Cochennec-Laureau N."/>
            <person name="Marin F."/>
            <person name="Gueguen Y."/>
            <person name="Montagnani C."/>
        </authorList>
    </citation>
    <scope>PROTEIN SEQUENCE OF 34-45</scope>
    <scope>SUBCELLULAR LOCATION</scope>
    <scope>TISSUE SPECIFICITY</scope>
    <source>
        <tissue>Shell</tissue>
    </source>
</reference>
<evidence type="ECO:0000255" key="1"/>
<evidence type="ECO:0000269" key="2">
    <source>
    </source>
</evidence>
<evidence type="ECO:0000305" key="3"/>
<sequence length="75" mass="8915">MQCVCLCVFVLLLAGCVTSQEEVEVDCYCVYFKYDCPEDYIESNRYNNQCQIRHKCCVPPPKYFFFVFPKGYRMP</sequence>